<name>CYAY_SHIF8</name>
<organism>
    <name type="scientific">Shigella flexneri serotype 5b (strain 8401)</name>
    <dbReference type="NCBI Taxonomy" id="373384"/>
    <lineage>
        <taxon>Bacteria</taxon>
        <taxon>Pseudomonadati</taxon>
        <taxon>Pseudomonadota</taxon>
        <taxon>Gammaproteobacteria</taxon>
        <taxon>Enterobacterales</taxon>
        <taxon>Enterobacteriaceae</taxon>
        <taxon>Shigella</taxon>
    </lineage>
</organism>
<comment type="function">
    <text evidence="1">Involved in iron-sulfur (Fe-S) cluster assembly. May act as a regulator of Fe-S biogenesis.</text>
</comment>
<comment type="similarity">
    <text evidence="1">Belongs to the frataxin family.</text>
</comment>
<dbReference type="EMBL" id="CP000266">
    <property type="protein sequence ID" value="ABF05720.1"/>
    <property type="molecule type" value="Genomic_DNA"/>
</dbReference>
<dbReference type="RefSeq" id="WP_000999938.1">
    <property type="nucleotide sequence ID" value="NC_008258.1"/>
</dbReference>
<dbReference type="SMR" id="Q0SYZ5"/>
<dbReference type="KEGG" id="sfv:SFV_3695"/>
<dbReference type="HOGENOM" id="CLU_080880_3_0_6"/>
<dbReference type="Proteomes" id="UP000000659">
    <property type="component" value="Chromosome"/>
</dbReference>
<dbReference type="GO" id="GO:0005829">
    <property type="term" value="C:cytosol"/>
    <property type="evidence" value="ECO:0007669"/>
    <property type="project" value="TreeGrafter"/>
</dbReference>
<dbReference type="GO" id="GO:0008199">
    <property type="term" value="F:ferric iron binding"/>
    <property type="evidence" value="ECO:0007669"/>
    <property type="project" value="InterPro"/>
</dbReference>
<dbReference type="GO" id="GO:0008198">
    <property type="term" value="F:ferrous iron binding"/>
    <property type="evidence" value="ECO:0007669"/>
    <property type="project" value="TreeGrafter"/>
</dbReference>
<dbReference type="GO" id="GO:0016226">
    <property type="term" value="P:iron-sulfur cluster assembly"/>
    <property type="evidence" value="ECO:0007669"/>
    <property type="project" value="UniProtKB-UniRule"/>
</dbReference>
<dbReference type="CDD" id="cd00503">
    <property type="entry name" value="Frataxin"/>
    <property type="match status" value="1"/>
</dbReference>
<dbReference type="FunFam" id="3.30.920.10:FF:000001">
    <property type="entry name" value="Iron-sulfur cluster assembly protein CyaY"/>
    <property type="match status" value="1"/>
</dbReference>
<dbReference type="Gene3D" id="3.30.920.10">
    <property type="entry name" value="Frataxin/CyaY"/>
    <property type="match status" value="1"/>
</dbReference>
<dbReference type="HAMAP" id="MF_00142">
    <property type="entry name" value="CyaY"/>
    <property type="match status" value="1"/>
</dbReference>
<dbReference type="InterPro" id="IPR047584">
    <property type="entry name" value="CyaY"/>
</dbReference>
<dbReference type="InterPro" id="IPR002908">
    <property type="entry name" value="Frataxin/CyaY"/>
</dbReference>
<dbReference type="InterPro" id="IPR036524">
    <property type="entry name" value="Frataxin/CyaY_sf"/>
</dbReference>
<dbReference type="InterPro" id="IPR020895">
    <property type="entry name" value="Frataxin_CS"/>
</dbReference>
<dbReference type="NCBIfam" id="TIGR03421">
    <property type="entry name" value="FeS_CyaY"/>
    <property type="match status" value="1"/>
</dbReference>
<dbReference type="PANTHER" id="PTHR16821">
    <property type="entry name" value="FRATAXIN"/>
    <property type="match status" value="1"/>
</dbReference>
<dbReference type="PANTHER" id="PTHR16821:SF2">
    <property type="entry name" value="FRATAXIN, MITOCHONDRIAL"/>
    <property type="match status" value="1"/>
</dbReference>
<dbReference type="Pfam" id="PF01491">
    <property type="entry name" value="Frataxin_Cyay"/>
    <property type="match status" value="1"/>
</dbReference>
<dbReference type="SMART" id="SM01219">
    <property type="entry name" value="Frataxin_Cyay"/>
    <property type="match status" value="1"/>
</dbReference>
<dbReference type="SUPFAM" id="SSF55387">
    <property type="entry name" value="Frataxin/Nqo15-like"/>
    <property type="match status" value="1"/>
</dbReference>
<dbReference type="PROSITE" id="PS01344">
    <property type="entry name" value="FRATAXIN_1"/>
    <property type="match status" value="1"/>
</dbReference>
<dbReference type="PROSITE" id="PS50810">
    <property type="entry name" value="FRATAXIN_2"/>
    <property type="match status" value="1"/>
</dbReference>
<sequence>MNDSEFHRLADQLWLTIEERLDDRDGDSDIDCEINGGVLTITFENGSKIIINRQEPLHQVWLATKQGGSHFDLKGDEWICDRSGETFWDLLEQAATQQAGETVSFR</sequence>
<keyword id="KW-0408">Iron</keyword>
<keyword id="KW-0479">Metal-binding</keyword>
<protein>
    <recommendedName>
        <fullName evidence="1">Iron-sulfur cluster assembly protein CyaY</fullName>
    </recommendedName>
</protein>
<reference key="1">
    <citation type="journal article" date="2006" name="BMC Genomics">
        <title>Complete genome sequence of Shigella flexneri 5b and comparison with Shigella flexneri 2a.</title>
        <authorList>
            <person name="Nie H."/>
            <person name="Yang F."/>
            <person name="Zhang X."/>
            <person name="Yang J."/>
            <person name="Chen L."/>
            <person name="Wang J."/>
            <person name="Xiong Z."/>
            <person name="Peng J."/>
            <person name="Sun L."/>
            <person name="Dong J."/>
            <person name="Xue Y."/>
            <person name="Xu X."/>
            <person name="Chen S."/>
            <person name="Yao Z."/>
            <person name="Shen Y."/>
            <person name="Jin Q."/>
        </authorList>
    </citation>
    <scope>NUCLEOTIDE SEQUENCE [LARGE SCALE GENOMIC DNA]</scope>
    <source>
        <strain>8401</strain>
    </source>
</reference>
<proteinExistence type="inferred from homology"/>
<accession>Q0SYZ5</accession>
<gene>
    <name evidence="1" type="primary">cyaY</name>
    <name type="ordered locus">SFV_3695</name>
</gene>
<feature type="chain" id="PRO_1000010962" description="Iron-sulfur cluster assembly protein CyaY">
    <location>
        <begin position="1"/>
        <end position="106"/>
    </location>
</feature>
<evidence type="ECO:0000255" key="1">
    <source>
        <dbReference type="HAMAP-Rule" id="MF_00142"/>
    </source>
</evidence>